<name>RS19_BRUC2</name>
<reference key="1">
    <citation type="submission" date="2007-10" db="EMBL/GenBank/DDBJ databases">
        <title>Brucella canis ATCC 23365 whole genome shotgun sequencing project.</title>
        <authorList>
            <person name="Setubal J.C."/>
            <person name="Bowns C."/>
            <person name="Boyle S."/>
            <person name="Crasta O.R."/>
            <person name="Czar M.J."/>
            <person name="Dharmanolla C."/>
            <person name="Gillespie J.J."/>
            <person name="Kenyon R.W."/>
            <person name="Lu J."/>
            <person name="Mane S."/>
            <person name="Mohapatra S."/>
            <person name="Nagrani S."/>
            <person name="Purkayastha A."/>
            <person name="Rajasimha H.K."/>
            <person name="Shallom J.M."/>
            <person name="Shallom S."/>
            <person name="Shukla M."/>
            <person name="Snyder E.E."/>
            <person name="Sobral B.W."/>
            <person name="Wattam A.R."/>
            <person name="Will R."/>
            <person name="Williams K."/>
            <person name="Yoo H."/>
            <person name="Bruce D."/>
            <person name="Detter C."/>
            <person name="Munk C."/>
            <person name="Brettin T.S."/>
        </authorList>
    </citation>
    <scope>NUCLEOTIDE SEQUENCE [LARGE SCALE GENOMIC DNA]</scope>
    <source>
        <strain>ATCC 23365 / NCTC 10854 / RM-666</strain>
    </source>
</reference>
<gene>
    <name evidence="1" type="primary">rpsS</name>
    <name type="ordered locus">BCAN_A1252</name>
</gene>
<feature type="chain" id="PRO_1000081759" description="Small ribosomal subunit protein uS19">
    <location>
        <begin position="1"/>
        <end position="92"/>
    </location>
</feature>
<organism>
    <name type="scientific">Brucella canis (strain ATCC 23365 / NCTC 10854 / RM-666)</name>
    <dbReference type="NCBI Taxonomy" id="483179"/>
    <lineage>
        <taxon>Bacteria</taxon>
        <taxon>Pseudomonadati</taxon>
        <taxon>Pseudomonadota</taxon>
        <taxon>Alphaproteobacteria</taxon>
        <taxon>Hyphomicrobiales</taxon>
        <taxon>Brucellaceae</taxon>
        <taxon>Brucella/Ochrobactrum group</taxon>
        <taxon>Brucella</taxon>
    </lineage>
</organism>
<sequence>MARSVWKGPFVDGYLLKKAEKVREGGRNEVIKMWSRRSTILPQFVGLTFGVYNGNKHVPVSVSEEMVGHKFGEFAPTRTYYGHGADKKAKRK</sequence>
<accession>A9M5P6</accession>
<dbReference type="EMBL" id="CP000872">
    <property type="protein sequence ID" value="ABX62301.1"/>
    <property type="molecule type" value="Genomic_DNA"/>
</dbReference>
<dbReference type="RefSeq" id="WP_002964358.1">
    <property type="nucleotide sequence ID" value="NC_010103.1"/>
</dbReference>
<dbReference type="SMR" id="A9M5P6"/>
<dbReference type="GeneID" id="97533528"/>
<dbReference type="KEGG" id="bcs:BCAN_A1252"/>
<dbReference type="HOGENOM" id="CLU_144911_0_1_5"/>
<dbReference type="Proteomes" id="UP000001385">
    <property type="component" value="Chromosome I"/>
</dbReference>
<dbReference type="GO" id="GO:0005737">
    <property type="term" value="C:cytoplasm"/>
    <property type="evidence" value="ECO:0007669"/>
    <property type="project" value="UniProtKB-ARBA"/>
</dbReference>
<dbReference type="GO" id="GO:0015935">
    <property type="term" value="C:small ribosomal subunit"/>
    <property type="evidence" value="ECO:0007669"/>
    <property type="project" value="InterPro"/>
</dbReference>
<dbReference type="GO" id="GO:0019843">
    <property type="term" value="F:rRNA binding"/>
    <property type="evidence" value="ECO:0007669"/>
    <property type="project" value="UniProtKB-UniRule"/>
</dbReference>
<dbReference type="GO" id="GO:0003735">
    <property type="term" value="F:structural constituent of ribosome"/>
    <property type="evidence" value="ECO:0007669"/>
    <property type="project" value="InterPro"/>
</dbReference>
<dbReference type="GO" id="GO:0000028">
    <property type="term" value="P:ribosomal small subunit assembly"/>
    <property type="evidence" value="ECO:0007669"/>
    <property type="project" value="TreeGrafter"/>
</dbReference>
<dbReference type="GO" id="GO:0006412">
    <property type="term" value="P:translation"/>
    <property type="evidence" value="ECO:0007669"/>
    <property type="project" value="UniProtKB-UniRule"/>
</dbReference>
<dbReference type="FunFam" id="3.30.860.10:FF:000001">
    <property type="entry name" value="30S ribosomal protein S19"/>
    <property type="match status" value="1"/>
</dbReference>
<dbReference type="Gene3D" id="3.30.860.10">
    <property type="entry name" value="30s Ribosomal Protein S19, Chain A"/>
    <property type="match status" value="1"/>
</dbReference>
<dbReference type="HAMAP" id="MF_00531">
    <property type="entry name" value="Ribosomal_uS19"/>
    <property type="match status" value="1"/>
</dbReference>
<dbReference type="InterPro" id="IPR002222">
    <property type="entry name" value="Ribosomal_uS19"/>
</dbReference>
<dbReference type="InterPro" id="IPR005732">
    <property type="entry name" value="Ribosomal_uS19_bac-type"/>
</dbReference>
<dbReference type="InterPro" id="IPR020934">
    <property type="entry name" value="Ribosomal_uS19_CS"/>
</dbReference>
<dbReference type="InterPro" id="IPR023575">
    <property type="entry name" value="Ribosomal_uS19_SF"/>
</dbReference>
<dbReference type="NCBIfam" id="TIGR01050">
    <property type="entry name" value="rpsS_bact"/>
    <property type="match status" value="1"/>
</dbReference>
<dbReference type="PANTHER" id="PTHR11880">
    <property type="entry name" value="RIBOSOMAL PROTEIN S19P FAMILY MEMBER"/>
    <property type="match status" value="1"/>
</dbReference>
<dbReference type="PANTHER" id="PTHR11880:SF8">
    <property type="entry name" value="SMALL RIBOSOMAL SUBUNIT PROTEIN US19M"/>
    <property type="match status" value="1"/>
</dbReference>
<dbReference type="Pfam" id="PF00203">
    <property type="entry name" value="Ribosomal_S19"/>
    <property type="match status" value="1"/>
</dbReference>
<dbReference type="PIRSF" id="PIRSF002144">
    <property type="entry name" value="Ribosomal_S19"/>
    <property type="match status" value="1"/>
</dbReference>
<dbReference type="PRINTS" id="PR00975">
    <property type="entry name" value="RIBOSOMALS19"/>
</dbReference>
<dbReference type="SUPFAM" id="SSF54570">
    <property type="entry name" value="Ribosomal protein S19"/>
    <property type="match status" value="1"/>
</dbReference>
<dbReference type="PROSITE" id="PS00323">
    <property type="entry name" value="RIBOSOMAL_S19"/>
    <property type="match status" value="1"/>
</dbReference>
<keyword id="KW-1185">Reference proteome</keyword>
<keyword id="KW-0687">Ribonucleoprotein</keyword>
<keyword id="KW-0689">Ribosomal protein</keyword>
<keyword id="KW-0694">RNA-binding</keyword>
<keyword id="KW-0699">rRNA-binding</keyword>
<evidence type="ECO:0000255" key="1">
    <source>
        <dbReference type="HAMAP-Rule" id="MF_00531"/>
    </source>
</evidence>
<evidence type="ECO:0000305" key="2"/>
<proteinExistence type="inferred from homology"/>
<protein>
    <recommendedName>
        <fullName evidence="1">Small ribosomal subunit protein uS19</fullName>
    </recommendedName>
    <alternativeName>
        <fullName evidence="2">30S ribosomal protein S19</fullName>
    </alternativeName>
</protein>
<comment type="function">
    <text evidence="1">Protein S19 forms a complex with S13 that binds strongly to the 16S ribosomal RNA.</text>
</comment>
<comment type="similarity">
    <text evidence="1">Belongs to the universal ribosomal protein uS19 family.</text>
</comment>